<organism>
    <name type="scientific">Polaromonas sp. (strain JS666 / ATCC BAA-500)</name>
    <dbReference type="NCBI Taxonomy" id="296591"/>
    <lineage>
        <taxon>Bacteria</taxon>
        <taxon>Pseudomonadati</taxon>
        <taxon>Pseudomonadota</taxon>
        <taxon>Betaproteobacteria</taxon>
        <taxon>Burkholderiales</taxon>
        <taxon>Comamonadaceae</taxon>
        <taxon>Polaromonas</taxon>
    </lineage>
</organism>
<accession>Q126M0</accession>
<comment type="function">
    <text evidence="1">The alpha subunit is responsible for the aldol cleavage of indoleglycerol phosphate to indole and glyceraldehyde 3-phosphate.</text>
</comment>
<comment type="catalytic activity">
    <reaction evidence="1">
        <text>(1S,2R)-1-C-(indol-3-yl)glycerol 3-phosphate + L-serine = D-glyceraldehyde 3-phosphate + L-tryptophan + H2O</text>
        <dbReference type="Rhea" id="RHEA:10532"/>
        <dbReference type="ChEBI" id="CHEBI:15377"/>
        <dbReference type="ChEBI" id="CHEBI:33384"/>
        <dbReference type="ChEBI" id="CHEBI:57912"/>
        <dbReference type="ChEBI" id="CHEBI:58866"/>
        <dbReference type="ChEBI" id="CHEBI:59776"/>
        <dbReference type="EC" id="4.2.1.20"/>
    </reaction>
</comment>
<comment type="pathway">
    <text evidence="1">Amino-acid biosynthesis; L-tryptophan biosynthesis; L-tryptophan from chorismate: step 5/5.</text>
</comment>
<comment type="subunit">
    <text evidence="1">Tetramer of two alpha and two beta chains.</text>
</comment>
<comment type="similarity">
    <text evidence="1">Belongs to the TrpA family.</text>
</comment>
<reference key="1">
    <citation type="journal article" date="2008" name="Appl. Environ. Microbiol.">
        <title>The genome of Polaromonas sp. strain JS666: insights into the evolution of a hydrocarbon- and xenobiotic-degrading bacterium, and features of relevance to biotechnology.</title>
        <authorList>
            <person name="Mattes T.E."/>
            <person name="Alexander A.K."/>
            <person name="Richardson P.M."/>
            <person name="Munk A.C."/>
            <person name="Han C.S."/>
            <person name="Stothard P."/>
            <person name="Coleman N.V."/>
        </authorList>
    </citation>
    <scope>NUCLEOTIDE SEQUENCE [LARGE SCALE GENOMIC DNA]</scope>
    <source>
        <strain>JS666 / ATCC BAA-500</strain>
    </source>
</reference>
<keyword id="KW-0028">Amino-acid biosynthesis</keyword>
<keyword id="KW-0057">Aromatic amino acid biosynthesis</keyword>
<keyword id="KW-0456">Lyase</keyword>
<keyword id="KW-1185">Reference proteome</keyword>
<keyword id="KW-0822">Tryptophan biosynthesis</keyword>
<gene>
    <name evidence="1" type="primary">trpA</name>
    <name type="ordered locus">Bpro_3617</name>
</gene>
<sequence length="272" mass="28779">MSRIASTFSALKSQGRKALIPYVTAGFPFADITPELMHSMVAGGADVIELGVPFSDPSADGPVIQKAGEKALALGIGLAQVLEMVRVFRQKDGTTPVVLMGYANPVERYDIKHGGSATESAFIRDAAQAGVDGVLIVDYPPEECVEFAARLRAHNMDLIFLLAPTSTSARMAQVAEVASGYVYYVSLKGVTGAGTLDVDAVEAMLPRIRQHVKVPVGVGFGIRDAATAKAIGKVADAVVIGSKIIQLIENQPRDKVATVARDFLKEIRAALD</sequence>
<feature type="chain" id="PRO_1000018248" description="Tryptophan synthase alpha chain">
    <location>
        <begin position="1"/>
        <end position="272"/>
    </location>
</feature>
<feature type="active site" description="Proton acceptor" evidence="1">
    <location>
        <position position="49"/>
    </location>
</feature>
<feature type="active site" description="Proton acceptor" evidence="1">
    <location>
        <position position="60"/>
    </location>
</feature>
<evidence type="ECO:0000255" key="1">
    <source>
        <dbReference type="HAMAP-Rule" id="MF_00131"/>
    </source>
</evidence>
<protein>
    <recommendedName>
        <fullName evidence="1">Tryptophan synthase alpha chain</fullName>
        <ecNumber evidence="1">4.2.1.20</ecNumber>
    </recommendedName>
</protein>
<dbReference type="EC" id="4.2.1.20" evidence="1"/>
<dbReference type="EMBL" id="CP000316">
    <property type="protein sequence ID" value="ABE45522.1"/>
    <property type="molecule type" value="Genomic_DNA"/>
</dbReference>
<dbReference type="RefSeq" id="WP_011484516.1">
    <property type="nucleotide sequence ID" value="NC_007948.1"/>
</dbReference>
<dbReference type="SMR" id="Q126M0"/>
<dbReference type="STRING" id="296591.Bpro_3617"/>
<dbReference type="KEGG" id="pol:Bpro_3617"/>
<dbReference type="eggNOG" id="COG0159">
    <property type="taxonomic scope" value="Bacteria"/>
</dbReference>
<dbReference type="HOGENOM" id="CLU_016734_0_0_4"/>
<dbReference type="OrthoDB" id="9804578at2"/>
<dbReference type="UniPathway" id="UPA00035">
    <property type="reaction ID" value="UER00044"/>
</dbReference>
<dbReference type="Proteomes" id="UP000001983">
    <property type="component" value="Chromosome"/>
</dbReference>
<dbReference type="GO" id="GO:0005829">
    <property type="term" value="C:cytosol"/>
    <property type="evidence" value="ECO:0007669"/>
    <property type="project" value="TreeGrafter"/>
</dbReference>
<dbReference type="GO" id="GO:0004834">
    <property type="term" value="F:tryptophan synthase activity"/>
    <property type="evidence" value="ECO:0007669"/>
    <property type="project" value="UniProtKB-UniRule"/>
</dbReference>
<dbReference type="CDD" id="cd04724">
    <property type="entry name" value="Tryptophan_synthase_alpha"/>
    <property type="match status" value="1"/>
</dbReference>
<dbReference type="FunFam" id="3.20.20.70:FF:000037">
    <property type="entry name" value="Tryptophan synthase alpha chain"/>
    <property type="match status" value="1"/>
</dbReference>
<dbReference type="Gene3D" id="3.20.20.70">
    <property type="entry name" value="Aldolase class I"/>
    <property type="match status" value="1"/>
</dbReference>
<dbReference type="HAMAP" id="MF_00131">
    <property type="entry name" value="Trp_synth_alpha"/>
    <property type="match status" value="1"/>
</dbReference>
<dbReference type="InterPro" id="IPR013785">
    <property type="entry name" value="Aldolase_TIM"/>
</dbReference>
<dbReference type="InterPro" id="IPR011060">
    <property type="entry name" value="RibuloseP-bd_barrel"/>
</dbReference>
<dbReference type="InterPro" id="IPR002028">
    <property type="entry name" value="Trp_synthase_suA"/>
</dbReference>
<dbReference type="NCBIfam" id="TIGR00262">
    <property type="entry name" value="trpA"/>
    <property type="match status" value="1"/>
</dbReference>
<dbReference type="PANTHER" id="PTHR43406:SF1">
    <property type="entry name" value="TRYPTOPHAN SYNTHASE ALPHA CHAIN, CHLOROPLASTIC"/>
    <property type="match status" value="1"/>
</dbReference>
<dbReference type="PANTHER" id="PTHR43406">
    <property type="entry name" value="TRYPTOPHAN SYNTHASE, ALPHA CHAIN"/>
    <property type="match status" value="1"/>
</dbReference>
<dbReference type="Pfam" id="PF00290">
    <property type="entry name" value="Trp_syntA"/>
    <property type="match status" value="1"/>
</dbReference>
<dbReference type="SUPFAM" id="SSF51366">
    <property type="entry name" value="Ribulose-phoshate binding barrel"/>
    <property type="match status" value="1"/>
</dbReference>
<proteinExistence type="inferred from homology"/>
<name>TRPA_POLSJ</name>